<comment type="caution">
    <text evidence="2">Product of a dubious gene prediction.</text>
</comment>
<keyword id="KW-1185">Reference proteome</keyword>
<organism>
    <name type="scientific">Dictyostelium discoideum</name>
    <name type="common">Social amoeba</name>
    <dbReference type="NCBI Taxonomy" id="44689"/>
    <lineage>
        <taxon>Eukaryota</taxon>
        <taxon>Amoebozoa</taxon>
        <taxon>Evosea</taxon>
        <taxon>Eumycetozoa</taxon>
        <taxon>Dictyostelia</taxon>
        <taxon>Dictyosteliales</taxon>
        <taxon>Dictyosteliaceae</taxon>
        <taxon>Dictyostelium</taxon>
    </lineage>
</organism>
<protein>
    <recommendedName>
        <fullName>Putative uncharacterized protein DDB_G0280331</fullName>
    </recommendedName>
</protein>
<accession>Q54VH6</accession>
<name>Y6520_DICDI</name>
<sequence length="48" mass="5527">MLFCNNNNNNNNNNNNNNNNNNNNNNNNNNNNNNNNNNNSSNNNNFSR</sequence>
<dbReference type="EMBL" id="AAFI02000035">
    <property type="protein sequence ID" value="EAL67392.1"/>
    <property type="molecule type" value="Genomic_DNA"/>
</dbReference>
<dbReference type="RefSeq" id="XP_641379.1">
    <property type="nucleotide sequence ID" value="XM_636287.1"/>
</dbReference>
<dbReference type="EnsemblProtists" id="EAL67392">
    <property type="protein sequence ID" value="EAL67392"/>
    <property type="gene ID" value="DDB_G0280331"/>
</dbReference>
<dbReference type="GeneID" id="8622513"/>
<dbReference type="KEGG" id="ddi:DDB_G0280331"/>
<dbReference type="dictyBase" id="DDB_G0280331"/>
<dbReference type="HOGENOM" id="CLU_3161079_0_0_1"/>
<dbReference type="InParanoid" id="Q54VH6"/>
<dbReference type="Proteomes" id="UP000002195">
    <property type="component" value="Chromosome 3"/>
</dbReference>
<reference key="1">
    <citation type="journal article" date="2005" name="Nature">
        <title>The genome of the social amoeba Dictyostelium discoideum.</title>
        <authorList>
            <person name="Eichinger L."/>
            <person name="Pachebat J.A."/>
            <person name="Gloeckner G."/>
            <person name="Rajandream M.A."/>
            <person name="Sucgang R."/>
            <person name="Berriman M."/>
            <person name="Song J."/>
            <person name="Olsen R."/>
            <person name="Szafranski K."/>
            <person name="Xu Q."/>
            <person name="Tunggal B."/>
            <person name="Kummerfeld S."/>
            <person name="Madera M."/>
            <person name="Konfortov B.A."/>
            <person name="Rivero F."/>
            <person name="Bankier A.T."/>
            <person name="Lehmann R."/>
            <person name="Hamlin N."/>
            <person name="Davies R."/>
            <person name="Gaudet P."/>
            <person name="Fey P."/>
            <person name="Pilcher K."/>
            <person name="Chen G."/>
            <person name="Saunders D."/>
            <person name="Sodergren E.J."/>
            <person name="Davis P."/>
            <person name="Kerhornou A."/>
            <person name="Nie X."/>
            <person name="Hall N."/>
            <person name="Anjard C."/>
            <person name="Hemphill L."/>
            <person name="Bason N."/>
            <person name="Farbrother P."/>
            <person name="Desany B."/>
            <person name="Just E."/>
            <person name="Morio T."/>
            <person name="Rost R."/>
            <person name="Churcher C.M."/>
            <person name="Cooper J."/>
            <person name="Haydock S."/>
            <person name="van Driessche N."/>
            <person name="Cronin A."/>
            <person name="Goodhead I."/>
            <person name="Muzny D.M."/>
            <person name="Mourier T."/>
            <person name="Pain A."/>
            <person name="Lu M."/>
            <person name="Harper D."/>
            <person name="Lindsay R."/>
            <person name="Hauser H."/>
            <person name="James K.D."/>
            <person name="Quiles M."/>
            <person name="Madan Babu M."/>
            <person name="Saito T."/>
            <person name="Buchrieser C."/>
            <person name="Wardroper A."/>
            <person name="Felder M."/>
            <person name="Thangavelu M."/>
            <person name="Johnson D."/>
            <person name="Knights A."/>
            <person name="Loulseged H."/>
            <person name="Mungall K.L."/>
            <person name="Oliver K."/>
            <person name="Price C."/>
            <person name="Quail M.A."/>
            <person name="Urushihara H."/>
            <person name="Hernandez J."/>
            <person name="Rabbinowitsch E."/>
            <person name="Steffen D."/>
            <person name="Sanders M."/>
            <person name="Ma J."/>
            <person name="Kohara Y."/>
            <person name="Sharp S."/>
            <person name="Simmonds M.N."/>
            <person name="Spiegler S."/>
            <person name="Tivey A."/>
            <person name="Sugano S."/>
            <person name="White B."/>
            <person name="Walker D."/>
            <person name="Woodward J.R."/>
            <person name="Winckler T."/>
            <person name="Tanaka Y."/>
            <person name="Shaulsky G."/>
            <person name="Schleicher M."/>
            <person name="Weinstock G.M."/>
            <person name="Rosenthal A."/>
            <person name="Cox E.C."/>
            <person name="Chisholm R.L."/>
            <person name="Gibbs R.A."/>
            <person name="Loomis W.F."/>
            <person name="Platzer M."/>
            <person name="Kay R.R."/>
            <person name="Williams J.G."/>
            <person name="Dear P.H."/>
            <person name="Noegel A.A."/>
            <person name="Barrell B.G."/>
            <person name="Kuspa A."/>
        </authorList>
    </citation>
    <scope>NUCLEOTIDE SEQUENCE [LARGE SCALE GENOMIC DNA]</scope>
    <source>
        <strain>AX4</strain>
    </source>
</reference>
<feature type="chain" id="PRO_0000352473" description="Putative uncharacterized protein DDB_G0280331">
    <location>
        <begin position="1"/>
        <end position="48"/>
    </location>
</feature>
<feature type="region of interest" description="Disordered" evidence="1">
    <location>
        <begin position="1"/>
        <end position="48"/>
    </location>
</feature>
<proteinExistence type="uncertain"/>
<evidence type="ECO:0000256" key="1">
    <source>
        <dbReference type="SAM" id="MobiDB-lite"/>
    </source>
</evidence>
<evidence type="ECO:0000305" key="2"/>
<gene>
    <name type="ORF">DDB_G0280331</name>
</gene>